<feature type="chain" id="PRO_0000405684" description="Protein SWT21">
    <location>
        <begin position="1"/>
        <end position="411"/>
    </location>
</feature>
<organism>
    <name type="scientific">Kluyveromyces lactis (strain ATCC 8585 / CBS 2359 / DSM 70799 / NBRC 1267 / NRRL Y-1140 / WM37)</name>
    <name type="common">Yeast</name>
    <name type="synonym">Candida sphaerica</name>
    <dbReference type="NCBI Taxonomy" id="284590"/>
    <lineage>
        <taxon>Eukaryota</taxon>
        <taxon>Fungi</taxon>
        <taxon>Dikarya</taxon>
        <taxon>Ascomycota</taxon>
        <taxon>Saccharomycotina</taxon>
        <taxon>Saccharomycetes</taxon>
        <taxon>Saccharomycetales</taxon>
        <taxon>Saccharomycetaceae</taxon>
        <taxon>Kluyveromyces</taxon>
    </lineage>
</organism>
<comment type="function">
    <text evidence="1">Involved in mRNA splicing. Helps to stabilize the U1 snRNP-5' splice site interaction (By similarity).</text>
</comment>
<comment type="subunit">
    <text evidence="1">Associates with snRNPs.</text>
</comment>
<comment type="subcellular location">
    <subcellularLocation>
        <location evidence="1">Nucleus</location>
    </subcellularLocation>
</comment>
<comment type="similarity">
    <text evidence="2">Belongs to the SWT21 family.</text>
</comment>
<keyword id="KW-0507">mRNA processing</keyword>
<keyword id="KW-0508">mRNA splicing</keyword>
<keyword id="KW-0539">Nucleus</keyword>
<keyword id="KW-1185">Reference proteome</keyword>
<name>SWT21_KLULA</name>
<evidence type="ECO:0000250" key="1"/>
<evidence type="ECO:0000305" key="2"/>
<dbReference type="EMBL" id="CR382124">
    <property type="protein sequence ID" value="CAH00538.1"/>
    <property type="molecule type" value="Genomic_DNA"/>
</dbReference>
<dbReference type="RefSeq" id="XP_453442.1">
    <property type="nucleotide sequence ID" value="XM_453442.1"/>
</dbReference>
<dbReference type="FunCoup" id="Q6CRJ7">
    <property type="interactions" value="36"/>
</dbReference>
<dbReference type="STRING" id="284590.Q6CRJ7"/>
<dbReference type="PaxDb" id="284590-Q6CRJ7"/>
<dbReference type="KEGG" id="kla:KLLA0_D08514g"/>
<dbReference type="eggNOG" id="ENOG502QVPI">
    <property type="taxonomic scope" value="Eukaryota"/>
</dbReference>
<dbReference type="HOGENOM" id="CLU_662333_0_0_1"/>
<dbReference type="InParanoid" id="Q6CRJ7"/>
<dbReference type="OMA" id="VICQDIF"/>
<dbReference type="Proteomes" id="UP000000598">
    <property type="component" value="Chromosome D"/>
</dbReference>
<dbReference type="GO" id="GO:0005634">
    <property type="term" value="C:nucleus"/>
    <property type="evidence" value="ECO:0007669"/>
    <property type="project" value="UniProtKB-SubCell"/>
</dbReference>
<dbReference type="GO" id="GO:0006397">
    <property type="term" value="P:mRNA processing"/>
    <property type="evidence" value="ECO:0007669"/>
    <property type="project" value="UniProtKB-KW"/>
</dbReference>
<dbReference type="GO" id="GO:0008380">
    <property type="term" value="P:RNA splicing"/>
    <property type="evidence" value="ECO:0007669"/>
    <property type="project" value="UniProtKB-KW"/>
</dbReference>
<dbReference type="Gene3D" id="2.130.10.10">
    <property type="entry name" value="YVTN repeat-like/Quinoprotein amine dehydrogenase"/>
    <property type="match status" value="1"/>
</dbReference>
<dbReference type="InterPro" id="IPR051150">
    <property type="entry name" value="SWT21/TCAB1_mRNA_Telomere"/>
</dbReference>
<dbReference type="InterPro" id="IPR015943">
    <property type="entry name" value="WD40/YVTN_repeat-like_dom_sf"/>
</dbReference>
<dbReference type="InterPro" id="IPR036322">
    <property type="entry name" value="WD40_repeat_dom_sf"/>
</dbReference>
<dbReference type="PANTHER" id="PTHR13211">
    <property type="entry name" value="TELOMERASE CAJAL BODY PROTEIN 1"/>
    <property type="match status" value="1"/>
</dbReference>
<dbReference type="PANTHER" id="PTHR13211:SF0">
    <property type="entry name" value="TELOMERASE CAJAL BODY PROTEIN 1"/>
    <property type="match status" value="1"/>
</dbReference>
<dbReference type="SUPFAM" id="SSF50978">
    <property type="entry name" value="WD40 repeat-like"/>
    <property type="match status" value="1"/>
</dbReference>
<sequence length="411" mass="47205">MQTIASTLDCYYGTNCNSLWSLEEELSRKFSAYAKNYEFPKLHRSYFHSVERYCPVICSQLTWSHDGTSICGVFDDFGIRQYLIPEDPLVDHWVPFTRWFVNGSIISSVVHPRYSLYEEDSAYQTILCSSRDLPIKLYSLRSDSINETSLYHYSTVNEENEAFETAYSMTILQDTMHFMTGSVRNRITMYDYNRHKPIWQHQWTKQSCGKSSQKAIVSCFDEYNEVHDNVRFAGTYKTEVLRIDTRSTKSELISERDSLDSWSNGIYQVIKSDNGHYLYCIKRNAREIDVIDTRMLKSRINILELPFKIGKQKFKASLNSAKGLLIGSYDGQVACWDKDCIEFGGLDPLQTAGTGIKPTNNILISDENVRVNCIATNPVDPNTLAISTSTDKFADDEGMTLKTSVKLIRMH</sequence>
<protein>
    <recommendedName>
        <fullName>Protein SWT21</fullName>
    </recommendedName>
</protein>
<accession>Q6CRJ7</accession>
<reference key="1">
    <citation type="journal article" date="2004" name="Nature">
        <title>Genome evolution in yeasts.</title>
        <authorList>
            <person name="Dujon B."/>
            <person name="Sherman D."/>
            <person name="Fischer G."/>
            <person name="Durrens P."/>
            <person name="Casaregola S."/>
            <person name="Lafontaine I."/>
            <person name="de Montigny J."/>
            <person name="Marck C."/>
            <person name="Neuveglise C."/>
            <person name="Talla E."/>
            <person name="Goffard N."/>
            <person name="Frangeul L."/>
            <person name="Aigle M."/>
            <person name="Anthouard V."/>
            <person name="Babour A."/>
            <person name="Barbe V."/>
            <person name="Barnay S."/>
            <person name="Blanchin S."/>
            <person name="Beckerich J.-M."/>
            <person name="Beyne E."/>
            <person name="Bleykasten C."/>
            <person name="Boisrame A."/>
            <person name="Boyer J."/>
            <person name="Cattolico L."/>
            <person name="Confanioleri F."/>
            <person name="de Daruvar A."/>
            <person name="Despons L."/>
            <person name="Fabre E."/>
            <person name="Fairhead C."/>
            <person name="Ferry-Dumazet H."/>
            <person name="Groppi A."/>
            <person name="Hantraye F."/>
            <person name="Hennequin C."/>
            <person name="Jauniaux N."/>
            <person name="Joyet P."/>
            <person name="Kachouri R."/>
            <person name="Kerrest A."/>
            <person name="Koszul R."/>
            <person name="Lemaire M."/>
            <person name="Lesur I."/>
            <person name="Ma L."/>
            <person name="Muller H."/>
            <person name="Nicaud J.-M."/>
            <person name="Nikolski M."/>
            <person name="Oztas S."/>
            <person name="Ozier-Kalogeropoulos O."/>
            <person name="Pellenz S."/>
            <person name="Potier S."/>
            <person name="Richard G.-F."/>
            <person name="Straub M.-L."/>
            <person name="Suleau A."/>
            <person name="Swennen D."/>
            <person name="Tekaia F."/>
            <person name="Wesolowski-Louvel M."/>
            <person name="Westhof E."/>
            <person name="Wirth B."/>
            <person name="Zeniou-Meyer M."/>
            <person name="Zivanovic Y."/>
            <person name="Bolotin-Fukuhara M."/>
            <person name="Thierry A."/>
            <person name="Bouchier C."/>
            <person name="Caudron B."/>
            <person name="Scarpelli C."/>
            <person name="Gaillardin C."/>
            <person name="Weissenbach J."/>
            <person name="Wincker P."/>
            <person name="Souciet J.-L."/>
        </authorList>
    </citation>
    <scope>NUCLEOTIDE SEQUENCE [LARGE SCALE GENOMIC DNA]</scope>
    <source>
        <strain>ATCC 8585 / CBS 2359 / DSM 70799 / NBRC 1267 / NRRL Y-1140 / WM37</strain>
    </source>
</reference>
<gene>
    <name type="primary">SWT21</name>
    <name type="ordered locus">KLLA0D08514g</name>
</gene>
<proteinExistence type="inferred from homology"/>